<protein>
    <recommendedName>
        <fullName evidence="1">Large ribosomal subunit protein bL33B</fullName>
    </recommendedName>
    <alternativeName>
        <fullName>50S ribosomal protein L33 2</fullName>
    </alternativeName>
</protein>
<evidence type="ECO:0000255" key="1">
    <source>
        <dbReference type="HAMAP-Rule" id="MF_00294"/>
    </source>
</evidence>
<evidence type="ECO:0000305" key="2"/>
<organism>
    <name type="scientific">Listeria monocytogenes serovar 1/2a (strain ATCC BAA-679 / EGD-e)</name>
    <dbReference type="NCBI Taxonomy" id="169963"/>
    <lineage>
        <taxon>Bacteria</taxon>
        <taxon>Bacillati</taxon>
        <taxon>Bacillota</taxon>
        <taxon>Bacilli</taxon>
        <taxon>Bacillales</taxon>
        <taxon>Listeriaceae</taxon>
        <taxon>Listeria</taxon>
    </lineage>
</organism>
<sequence length="49" mass="5698">MKKKTSLACSECGSRNYTVNVSGTQKETRLEVKKFCRHCNKHTLHRETK</sequence>
<name>RL332_LISMO</name>
<dbReference type="EMBL" id="AL591974">
    <property type="protein sequence ID" value="CAD00771.1"/>
    <property type="molecule type" value="Genomic_DNA"/>
</dbReference>
<dbReference type="PIR" id="AE1105">
    <property type="entry name" value="AE1105"/>
</dbReference>
<dbReference type="SMR" id="P66221"/>
<dbReference type="STRING" id="169963.gene:17592895"/>
<dbReference type="PaxDb" id="169963-lmo0244"/>
<dbReference type="EnsemblBacteria" id="CAD00771">
    <property type="protein sequence ID" value="CAD00771"/>
    <property type="gene ID" value="CAD00771"/>
</dbReference>
<dbReference type="KEGG" id="lmo:lmo0244"/>
<dbReference type="PATRIC" id="fig|169963.11.peg.252"/>
<dbReference type="eggNOG" id="COG0267">
    <property type="taxonomic scope" value="Bacteria"/>
</dbReference>
<dbReference type="HOGENOM" id="CLU_190949_0_1_9"/>
<dbReference type="OrthoDB" id="9801333at2"/>
<dbReference type="PhylomeDB" id="P66221"/>
<dbReference type="BioCyc" id="LMON169963:LMO0244-MONOMER"/>
<dbReference type="Proteomes" id="UP000000817">
    <property type="component" value="Chromosome"/>
</dbReference>
<dbReference type="GO" id="GO:0005737">
    <property type="term" value="C:cytoplasm"/>
    <property type="evidence" value="ECO:0007669"/>
    <property type="project" value="UniProtKB-ARBA"/>
</dbReference>
<dbReference type="GO" id="GO:1990904">
    <property type="term" value="C:ribonucleoprotein complex"/>
    <property type="evidence" value="ECO:0007669"/>
    <property type="project" value="UniProtKB-KW"/>
</dbReference>
<dbReference type="GO" id="GO:0005840">
    <property type="term" value="C:ribosome"/>
    <property type="evidence" value="ECO:0007669"/>
    <property type="project" value="UniProtKB-KW"/>
</dbReference>
<dbReference type="GO" id="GO:0003735">
    <property type="term" value="F:structural constituent of ribosome"/>
    <property type="evidence" value="ECO:0007669"/>
    <property type="project" value="InterPro"/>
</dbReference>
<dbReference type="GO" id="GO:0006412">
    <property type="term" value="P:translation"/>
    <property type="evidence" value="ECO:0007669"/>
    <property type="project" value="UniProtKB-UniRule"/>
</dbReference>
<dbReference type="Gene3D" id="2.20.28.120">
    <property type="entry name" value="Ribosomal protein L33"/>
    <property type="match status" value="1"/>
</dbReference>
<dbReference type="HAMAP" id="MF_00294">
    <property type="entry name" value="Ribosomal_bL33"/>
    <property type="match status" value="1"/>
</dbReference>
<dbReference type="InterPro" id="IPR001705">
    <property type="entry name" value="Ribosomal_bL33"/>
</dbReference>
<dbReference type="InterPro" id="IPR038584">
    <property type="entry name" value="Ribosomal_bL33_sf"/>
</dbReference>
<dbReference type="InterPro" id="IPR011332">
    <property type="entry name" value="Ribosomal_zn-bd"/>
</dbReference>
<dbReference type="NCBIfam" id="NF001764">
    <property type="entry name" value="PRK00504.1"/>
    <property type="match status" value="1"/>
</dbReference>
<dbReference type="NCBIfam" id="TIGR01023">
    <property type="entry name" value="rpmG_bact"/>
    <property type="match status" value="1"/>
</dbReference>
<dbReference type="Pfam" id="PF00471">
    <property type="entry name" value="Ribosomal_L33"/>
    <property type="match status" value="1"/>
</dbReference>
<dbReference type="SUPFAM" id="SSF57829">
    <property type="entry name" value="Zn-binding ribosomal proteins"/>
    <property type="match status" value="1"/>
</dbReference>
<accession>P66221</accession>
<accession>Q92F31</accession>
<gene>
    <name type="primary">rpmG2</name>
    <name type="ordered locus">lmo0244</name>
</gene>
<feature type="chain" id="PRO_0000170182" description="Large ribosomal subunit protein bL33B">
    <location>
        <begin position="1"/>
        <end position="49"/>
    </location>
</feature>
<comment type="similarity">
    <text evidence="2">Belongs to the bacterial ribosomal protein bL33 family.</text>
</comment>
<reference key="1">
    <citation type="journal article" date="2001" name="Science">
        <title>Comparative genomics of Listeria species.</title>
        <authorList>
            <person name="Glaser P."/>
            <person name="Frangeul L."/>
            <person name="Buchrieser C."/>
            <person name="Rusniok C."/>
            <person name="Amend A."/>
            <person name="Baquero F."/>
            <person name="Berche P."/>
            <person name="Bloecker H."/>
            <person name="Brandt P."/>
            <person name="Chakraborty T."/>
            <person name="Charbit A."/>
            <person name="Chetouani F."/>
            <person name="Couve E."/>
            <person name="de Daruvar A."/>
            <person name="Dehoux P."/>
            <person name="Domann E."/>
            <person name="Dominguez-Bernal G."/>
            <person name="Duchaud E."/>
            <person name="Durant L."/>
            <person name="Dussurget O."/>
            <person name="Entian K.-D."/>
            <person name="Fsihi H."/>
            <person name="Garcia-del Portillo F."/>
            <person name="Garrido P."/>
            <person name="Gautier L."/>
            <person name="Goebel W."/>
            <person name="Gomez-Lopez N."/>
            <person name="Hain T."/>
            <person name="Hauf J."/>
            <person name="Jackson D."/>
            <person name="Jones L.-M."/>
            <person name="Kaerst U."/>
            <person name="Kreft J."/>
            <person name="Kuhn M."/>
            <person name="Kunst F."/>
            <person name="Kurapkat G."/>
            <person name="Madueno E."/>
            <person name="Maitournam A."/>
            <person name="Mata Vicente J."/>
            <person name="Ng E."/>
            <person name="Nedjari H."/>
            <person name="Nordsiek G."/>
            <person name="Novella S."/>
            <person name="de Pablos B."/>
            <person name="Perez-Diaz J.-C."/>
            <person name="Purcell R."/>
            <person name="Remmel B."/>
            <person name="Rose M."/>
            <person name="Schlueter T."/>
            <person name="Simoes N."/>
            <person name="Tierrez A."/>
            <person name="Vazquez-Boland J.-A."/>
            <person name="Voss H."/>
            <person name="Wehland J."/>
            <person name="Cossart P."/>
        </authorList>
    </citation>
    <scope>NUCLEOTIDE SEQUENCE [LARGE SCALE GENOMIC DNA]</scope>
    <source>
        <strain>ATCC BAA-679 / EGD-e</strain>
    </source>
</reference>
<keyword id="KW-1185">Reference proteome</keyword>
<keyword id="KW-0687">Ribonucleoprotein</keyword>
<keyword id="KW-0689">Ribosomal protein</keyword>
<proteinExistence type="inferred from homology"/>